<accession>P0C954</accession>
<accession>Q4WM30</accession>
<accession>Q9P8U4</accession>
<gene>
    <name type="primary">gel2</name>
    <name type="ORF">AFUA_6G11390</name>
</gene>
<reference key="1">
    <citation type="journal article" date="2005" name="Nature">
        <title>Genomic sequence of the pathogenic and allergenic filamentous fungus Aspergillus fumigatus.</title>
        <authorList>
            <person name="Nierman W.C."/>
            <person name="Pain A."/>
            <person name="Anderson M.J."/>
            <person name="Wortman J.R."/>
            <person name="Kim H.S."/>
            <person name="Arroyo J."/>
            <person name="Berriman M."/>
            <person name="Abe K."/>
            <person name="Archer D.B."/>
            <person name="Bermejo C."/>
            <person name="Bennett J.W."/>
            <person name="Bowyer P."/>
            <person name="Chen D."/>
            <person name="Collins M."/>
            <person name="Coulsen R."/>
            <person name="Davies R."/>
            <person name="Dyer P.S."/>
            <person name="Farman M.L."/>
            <person name="Fedorova N."/>
            <person name="Fedorova N.D."/>
            <person name="Feldblyum T.V."/>
            <person name="Fischer R."/>
            <person name="Fosker N."/>
            <person name="Fraser A."/>
            <person name="Garcia J.L."/>
            <person name="Garcia M.J."/>
            <person name="Goble A."/>
            <person name="Goldman G.H."/>
            <person name="Gomi K."/>
            <person name="Griffith-Jones S."/>
            <person name="Gwilliam R."/>
            <person name="Haas B.J."/>
            <person name="Haas H."/>
            <person name="Harris D.E."/>
            <person name="Horiuchi H."/>
            <person name="Huang J."/>
            <person name="Humphray S."/>
            <person name="Jimenez J."/>
            <person name="Keller N."/>
            <person name="Khouri H."/>
            <person name="Kitamoto K."/>
            <person name="Kobayashi T."/>
            <person name="Konzack S."/>
            <person name="Kulkarni R."/>
            <person name="Kumagai T."/>
            <person name="Lafton A."/>
            <person name="Latge J.-P."/>
            <person name="Li W."/>
            <person name="Lord A."/>
            <person name="Lu C."/>
            <person name="Majoros W.H."/>
            <person name="May G.S."/>
            <person name="Miller B.L."/>
            <person name="Mohamoud Y."/>
            <person name="Molina M."/>
            <person name="Monod M."/>
            <person name="Mouyna I."/>
            <person name="Mulligan S."/>
            <person name="Murphy L.D."/>
            <person name="O'Neil S."/>
            <person name="Paulsen I."/>
            <person name="Penalva M.A."/>
            <person name="Pertea M."/>
            <person name="Price C."/>
            <person name="Pritchard B.L."/>
            <person name="Quail M.A."/>
            <person name="Rabbinowitsch E."/>
            <person name="Rawlins N."/>
            <person name="Rajandream M.A."/>
            <person name="Reichard U."/>
            <person name="Renauld H."/>
            <person name="Robson G.D."/>
            <person name="Rodriguez de Cordoba S."/>
            <person name="Rodriguez-Pena J.M."/>
            <person name="Ronning C.M."/>
            <person name="Rutter S."/>
            <person name="Salzberg S.L."/>
            <person name="Sanchez M."/>
            <person name="Sanchez-Ferrero J.C."/>
            <person name="Saunders D."/>
            <person name="Seeger K."/>
            <person name="Squares R."/>
            <person name="Squares S."/>
            <person name="Takeuchi M."/>
            <person name="Tekaia F."/>
            <person name="Turner G."/>
            <person name="Vazquez de Aldana C.R."/>
            <person name="Weidman J."/>
            <person name="White O."/>
            <person name="Woodward J.R."/>
            <person name="Yu J.-H."/>
            <person name="Fraser C.M."/>
            <person name="Galagan J.E."/>
            <person name="Asai K."/>
            <person name="Machida M."/>
            <person name="Hall N."/>
            <person name="Barrell B.G."/>
            <person name="Denning D.W."/>
        </authorList>
    </citation>
    <scope>NUCLEOTIDE SEQUENCE [LARGE SCALE GENOMIC DNA]</scope>
    <source>
        <strain>ATCC MYA-4609 / CBS 101355 / FGSC A1100 / Af293</strain>
    </source>
</reference>
<evidence type="ECO:0000250" key="1"/>
<evidence type="ECO:0000250" key="2">
    <source>
        <dbReference type="UniProtKB" id="Q06135"/>
    </source>
</evidence>
<evidence type="ECO:0000255" key="3"/>
<evidence type="ECO:0000256" key="4">
    <source>
        <dbReference type="SAM" id="MobiDB-lite"/>
    </source>
</evidence>
<evidence type="ECO:0000305" key="5"/>
<sequence length="475" mass="51718">MLPTYVRLFTAVCALATTASAVVPIEVKGKDFVNSKTGDRFQILGVDYQPGGSSGFTKDKDPLSDPDACLRDAALMQRLGVNTIRIYNLSPSLNHDECASIFNAAGIYMILDVNSPLYGGYLDRTDPESTYNDVYFKQVFGVIEAFKNFPNTLAFFAGNEVINEQSVKNVPTYVRAIQRDMKDYIAKNLDRSIPVGYSAADIRPILMDTLNYFMCADDANSQSDFFGLNSYSWCGNSSYTKSGYDVLTKDFADASIPVFFSEYGCNEVQPRYFSEVQALYGQEMTQSFSGGLVYEYTQEENDYGLVQINDNGTVTLLVDYDNLMAQYSKLDMSRIQASNTTQTSAKPPKCESSLITNSTFTDSFDLPKRPSKVQTMIDKGLSDANTGKLVEVKNTDIKQKIYNANGEEITGIKLSILASGESNTPGAHSSGSTSGSSSSGGSSSSSSDKESAAGTISVPFVGLLSAASFMAFFML</sequence>
<comment type="function">
    <text evidence="1">Splits internally a 1,3-beta-glucan molecule and transfers the newly generated reducing end (the donor) to the non-reducing end of another 1,3-beta-glucan molecule (the acceptor) forming a 1,3-beta linkage, resulting in the elongation of 1,3-beta-glucan chains in the cell wall. Involved in cell wall morphogenesis (By similarity).</text>
</comment>
<comment type="subcellular location">
    <subcellularLocation>
        <location evidence="5">Cell membrane</location>
        <topology evidence="5">Lipid-anchor</topology>
        <topology evidence="5">GPI-anchor</topology>
    </subcellularLocation>
</comment>
<comment type="PTM">
    <text evidence="1">The GPI-like anchor contains a phosphoceramide lipid group.</text>
</comment>
<comment type="similarity">
    <text evidence="5">Belongs to the glycosyl hydrolase 72 family.</text>
</comment>
<keyword id="KW-1003">Cell membrane</keyword>
<keyword id="KW-1015">Disulfide bond</keyword>
<keyword id="KW-0325">Glycoprotein</keyword>
<keyword id="KW-0336">GPI-anchor</keyword>
<keyword id="KW-0449">Lipoprotein</keyword>
<keyword id="KW-0472">Membrane</keyword>
<keyword id="KW-1185">Reference proteome</keyword>
<keyword id="KW-0732">Signal</keyword>
<keyword id="KW-0808">Transferase</keyword>
<proteinExistence type="inferred from homology"/>
<dbReference type="EC" id="2.4.1.-"/>
<dbReference type="EMBL" id="AAHF01000006">
    <property type="protein sequence ID" value="EAL88984.1"/>
    <property type="molecule type" value="Genomic_DNA"/>
</dbReference>
<dbReference type="RefSeq" id="XP_751022.1">
    <property type="nucleotide sequence ID" value="XM_745929.1"/>
</dbReference>
<dbReference type="SMR" id="P0C954"/>
<dbReference type="FunCoup" id="P0C954">
    <property type="interactions" value="62"/>
</dbReference>
<dbReference type="STRING" id="330879.P0C954"/>
<dbReference type="Allergome" id="8986">
    <property type="allergen name" value="Asp f GT"/>
</dbReference>
<dbReference type="CAZy" id="GH72">
    <property type="family name" value="Glycoside Hydrolase Family 72"/>
</dbReference>
<dbReference type="GlyCosmos" id="P0C954">
    <property type="glycosylation" value="4 sites, No reported glycans"/>
</dbReference>
<dbReference type="EnsemblFungi" id="EAL88984">
    <property type="protein sequence ID" value="EAL88984"/>
    <property type="gene ID" value="AFUA_6G11390"/>
</dbReference>
<dbReference type="GeneID" id="3508327"/>
<dbReference type="KEGG" id="afm:AFUA_6G11390"/>
<dbReference type="VEuPathDB" id="FungiDB:Afu6g11390"/>
<dbReference type="eggNOG" id="ENOG502QRZZ">
    <property type="taxonomic scope" value="Eukaryota"/>
</dbReference>
<dbReference type="HOGENOM" id="CLU_021855_1_2_1"/>
<dbReference type="InParanoid" id="P0C954"/>
<dbReference type="OMA" id="HDKCMTI"/>
<dbReference type="OrthoDB" id="421038at2759"/>
<dbReference type="PHI-base" id="PHI:434"/>
<dbReference type="Proteomes" id="UP000002530">
    <property type="component" value="Chromosome 6"/>
</dbReference>
<dbReference type="GO" id="GO:0009277">
    <property type="term" value="C:fungal-type cell wall"/>
    <property type="evidence" value="ECO:0000318"/>
    <property type="project" value="GO_Central"/>
</dbReference>
<dbReference type="GO" id="GO:0005886">
    <property type="term" value="C:plasma membrane"/>
    <property type="evidence" value="ECO:0007669"/>
    <property type="project" value="UniProtKB-SubCell"/>
</dbReference>
<dbReference type="GO" id="GO:0098552">
    <property type="term" value="C:side of membrane"/>
    <property type="evidence" value="ECO:0007669"/>
    <property type="project" value="UniProtKB-KW"/>
</dbReference>
<dbReference type="GO" id="GO:0042124">
    <property type="term" value="F:1,3-beta-glucanosyltransferase activity"/>
    <property type="evidence" value="ECO:0000314"/>
    <property type="project" value="AspGD"/>
</dbReference>
<dbReference type="GO" id="GO:0042123">
    <property type="term" value="F:glucanosyltransferase activity"/>
    <property type="evidence" value="ECO:0000314"/>
    <property type="project" value="AspGD"/>
</dbReference>
<dbReference type="GO" id="GO:0071970">
    <property type="term" value="P:fungal-type cell wall (1-&gt;3)-beta-D-glucan biosynthetic process"/>
    <property type="evidence" value="ECO:0000318"/>
    <property type="project" value="GO_Central"/>
</dbReference>
<dbReference type="GO" id="GO:0031505">
    <property type="term" value="P:fungal-type cell wall organization"/>
    <property type="evidence" value="ECO:0000315"/>
    <property type="project" value="AspGD"/>
</dbReference>
<dbReference type="FunFam" id="3.20.20.80:FF:000032">
    <property type="entry name" value="1,3-beta-glucanosyltransferase"/>
    <property type="match status" value="1"/>
</dbReference>
<dbReference type="Gene3D" id="3.20.20.80">
    <property type="entry name" value="Glycosidases"/>
    <property type="match status" value="1"/>
</dbReference>
<dbReference type="InterPro" id="IPR004886">
    <property type="entry name" value="Glucanosyltransferase"/>
</dbReference>
<dbReference type="InterPro" id="IPR017853">
    <property type="entry name" value="Glycoside_hydrolase_SF"/>
</dbReference>
<dbReference type="PANTHER" id="PTHR31468">
    <property type="entry name" value="1,3-BETA-GLUCANOSYLTRANSFERASE GAS1"/>
    <property type="match status" value="1"/>
</dbReference>
<dbReference type="PANTHER" id="PTHR31468:SF4">
    <property type="entry name" value="1,3-BETA-GLUCANOSYLTRANSFERASE GAS3-RELATED"/>
    <property type="match status" value="1"/>
</dbReference>
<dbReference type="Pfam" id="PF03198">
    <property type="entry name" value="Glyco_hydro_72"/>
    <property type="match status" value="1"/>
</dbReference>
<dbReference type="SUPFAM" id="SSF51445">
    <property type="entry name" value="(Trans)glycosidases"/>
    <property type="match status" value="1"/>
</dbReference>
<name>GEL2_ASPFU</name>
<feature type="signal peptide" evidence="3">
    <location>
        <begin position="1"/>
        <end position="21"/>
    </location>
</feature>
<feature type="chain" id="PRO_0000245549" description="1,3-beta-glucanosyltransferase gel2">
    <location>
        <begin position="22"/>
        <end position="451"/>
    </location>
</feature>
<feature type="propeptide" id="PRO_0000245550" description="Removed in mature form" evidence="3">
    <location>
        <begin position="452"/>
        <end position="475"/>
    </location>
</feature>
<feature type="region of interest" description="Disordered" evidence="4">
    <location>
        <begin position="420"/>
        <end position="451"/>
    </location>
</feature>
<feature type="compositionally biased region" description="Low complexity" evidence="4">
    <location>
        <begin position="429"/>
        <end position="446"/>
    </location>
</feature>
<feature type="active site" description="Proton donor" evidence="1">
    <location>
        <position position="160"/>
    </location>
</feature>
<feature type="active site" description="Nucleophile" evidence="1">
    <location>
        <position position="262"/>
    </location>
</feature>
<feature type="binding site" evidence="2">
    <location>
        <position position="87"/>
    </location>
    <ligand>
        <name>(1,3-beta-D-glucosyl)n</name>
        <dbReference type="ChEBI" id="CHEBI:37671"/>
        <label>1</label>
        <note>donor substrate</note>
    </ligand>
</feature>
<feature type="binding site" evidence="2">
    <location>
        <position position="159"/>
    </location>
    <ligand>
        <name>(1,3-beta-D-glucosyl)n</name>
        <dbReference type="ChEBI" id="CHEBI:37671"/>
        <label>1</label>
        <note>donor substrate</note>
    </ligand>
</feature>
<feature type="binding site" evidence="2">
    <location>
        <position position="160"/>
    </location>
    <ligand>
        <name>(1,3-beta-D-glucosyl)n</name>
        <dbReference type="ChEBI" id="CHEBI:37671"/>
        <label>2</label>
        <note>acceptor substrate</note>
    </ligand>
</feature>
<feature type="binding site" evidence="2">
    <location>
        <position position="201"/>
    </location>
    <ligand>
        <name>(1,3-beta-D-glucosyl)n</name>
        <dbReference type="ChEBI" id="CHEBI:37671"/>
        <label>2</label>
        <note>acceptor substrate</note>
    </ligand>
</feature>
<feature type="binding site" evidence="2">
    <location>
        <position position="294"/>
    </location>
    <ligand>
        <name>(1,3-beta-D-glucosyl)n</name>
        <dbReference type="ChEBI" id="CHEBI:37671"/>
        <label>1</label>
        <note>donor substrate</note>
    </ligand>
</feature>
<feature type="lipid moiety-binding region" description="GPI-like-anchor amidated serine" evidence="3">
    <location>
        <position position="451"/>
    </location>
</feature>
<feature type="glycosylation site" description="N-linked (GlcNAc...) asparagine" evidence="3">
    <location>
        <position position="236"/>
    </location>
</feature>
<feature type="glycosylation site" description="N-linked (GlcNAc...) asparagine" evidence="3">
    <location>
        <position position="311"/>
    </location>
</feature>
<feature type="glycosylation site" description="N-linked (GlcNAc...) asparagine" evidence="3">
    <location>
        <position position="339"/>
    </location>
</feature>
<feature type="glycosylation site" description="N-linked (GlcNAc...) asparagine" evidence="3">
    <location>
        <position position="357"/>
    </location>
</feature>
<feature type="disulfide bond" evidence="2">
    <location>
        <begin position="69"/>
        <end position="98"/>
    </location>
</feature>
<feature type="disulfide bond" evidence="2">
    <location>
        <begin position="215"/>
        <end position="350"/>
    </location>
</feature>
<feature type="disulfide bond" evidence="2">
    <location>
        <begin position="234"/>
        <end position="265"/>
    </location>
</feature>
<organism>
    <name type="scientific">Aspergillus fumigatus (strain ATCC MYA-4609 / CBS 101355 / FGSC A1100 / Af293)</name>
    <name type="common">Neosartorya fumigata</name>
    <dbReference type="NCBI Taxonomy" id="330879"/>
    <lineage>
        <taxon>Eukaryota</taxon>
        <taxon>Fungi</taxon>
        <taxon>Dikarya</taxon>
        <taxon>Ascomycota</taxon>
        <taxon>Pezizomycotina</taxon>
        <taxon>Eurotiomycetes</taxon>
        <taxon>Eurotiomycetidae</taxon>
        <taxon>Eurotiales</taxon>
        <taxon>Aspergillaceae</taxon>
        <taxon>Aspergillus</taxon>
        <taxon>Aspergillus subgen. Fumigati</taxon>
    </lineage>
</organism>
<protein>
    <recommendedName>
        <fullName>1,3-beta-glucanosyltransferase gel2</fullName>
        <ecNumber>2.4.1.-</ecNumber>
    </recommendedName>
    <alternativeName>
        <fullName>Glucan elongating glucanosyltransferase 2</fullName>
    </alternativeName>
</protein>